<proteinExistence type="inferred from homology"/>
<sequence length="117" mass="13699">MEYKRADRVADLLRREMADLLLRRIKDPRVSKVTITAIEVTDDLQNAKVFFCLMGAATEEEKRSAALGLNRGKGFMRLELGKRLHLRYLPQLSFHYDSSFEYGDKIERLLKELHKNE</sequence>
<organism>
    <name type="scientific">Syntrophobacter fumaroxidans (strain DSM 10017 / MPOB)</name>
    <dbReference type="NCBI Taxonomy" id="335543"/>
    <lineage>
        <taxon>Bacteria</taxon>
        <taxon>Pseudomonadati</taxon>
        <taxon>Thermodesulfobacteriota</taxon>
        <taxon>Syntrophobacteria</taxon>
        <taxon>Syntrophobacterales</taxon>
        <taxon>Syntrophobacteraceae</taxon>
        <taxon>Syntrophobacter</taxon>
    </lineage>
</organism>
<reference key="1">
    <citation type="submission" date="2006-10" db="EMBL/GenBank/DDBJ databases">
        <title>Complete sequence of Syntrophobacter fumaroxidans MPOB.</title>
        <authorList>
            <consortium name="US DOE Joint Genome Institute"/>
            <person name="Copeland A."/>
            <person name="Lucas S."/>
            <person name="Lapidus A."/>
            <person name="Barry K."/>
            <person name="Detter J.C."/>
            <person name="Glavina del Rio T."/>
            <person name="Hammon N."/>
            <person name="Israni S."/>
            <person name="Pitluck S."/>
            <person name="Goltsman E.G."/>
            <person name="Martinez M."/>
            <person name="Schmutz J."/>
            <person name="Larimer F."/>
            <person name="Land M."/>
            <person name="Hauser L."/>
            <person name="Kyrpides N."/>
            <person name="Kim E."/>
            <person name="Boone D.R."/>
            <person name="Brockman F."/>
            <person name="Culley D."/>
            <person name="Ferry J."/>
            <person name="Gunsalus R."/>
            <person name="McInerney M.J."/>
            <person name="Morrison M."/>
            <person name="Plugge C."/>
            <person name="Rohlin L."/>
            <person name="Scholten J."/>
            <person name="Sieber J."/>
            <person name="Stams A.J.M."/>
            <person name="Worm P."/>
            <person name="Henstra A.M."/>
            <person name="Richardson P."/>
        </authorList>
    </citation>
    <scope>NUCLEOTIDE SEQUENCE [LARGE SCALE GENOMIC DNA]</scope>
    <source>
        <strain>DSM 10017 / MPOB</strain>
    </source>
</reference>
<dbReference type="EMBL" id="CP000478">
    <property type="protein sequence ID" value="ABK16922.1"/>
    <property type="molecule type" value="Genomic_DNA"/>
</dbReference>
<dbReference type="RefSeq" id="WP_011698093.1">
    <property type="nucleotide sequence ID" value="NC_008554.1"/>
</dbReference>
<dbReference type="SMR" id="A0LHM0"/>
<dbReference type="FunCoup" id="A0LHM0">
    <property type="interactions" value="467"/>
</dbReference>
<dbReference type="STRING" id="335543.Sfum_1230"/>
<dbReference type="KEGG" id="sfu:Sfum_1230"/>
<dbReference type="eggNOG" id="COG0858">
    <property type="taxonomic scope" value="Bacteria"/>
</dbReference>
<dbReference type="HOGENOM" id="CLU_089475_5_0_7"/>
<dbReference type="InParanoid" id="A0LHM0"/>
<dbReference type="OrthoDB" id="307788at2"/>
<dbReference type="Proteomes" id="UP000001784">
    <property type="component" value="Chromosome"/>
</dbReference>
<dbReference type="GO" id="GO:0005829">
    <property type="term" value="C:cytosol"/>
    <property type="evidence" value="ECO:0007669"/>
    <property type="project" value="TreeGrafter"/>
</dbReference>
<dbReference type="GO" id="GO:0043024">
    <property type="term" value="F:ribosomal small subunit binding"/>
    <property type="evidence" value="ECO:0007669"/>
    <property type="project" value="TreeGrafter"/>
</dbReference>
<dbReference type="GO" id="GO:0030490">
    <property type="term" value="P:maturation of SSU-rRNA"/>
    <property type="evidence" value="ECO:0007669"/>
    <property type="project" value="UniProtKB-UniRule"/>
</dbReference>
<dbReference type="Gene3D" id="3.30.300.20">
    <property type="match status" value="1"/>
</dbReference>
<dbReference type="HAMAP" id="MF_00003">
    <property type="entry name" value="RbfA"/>
    <property type="match status" value="1"/>
</dbReference>
<dbReference type="InterPro" id="IPR015946">
    <property type="entry name" value="KH_dom-like_a/b"/>
</dbReference>
<dbReference type="InterPro" id="IPR000238">
    <property type="entry name" value="RbfA"/>
</dbReference>
<dbReference type="InterPro" id="IPR023799">
    <property type="entry name" value="RbfA_dom_sf"/>
</dbReference>
<dbReference type="NCBIfam" id="TIGR00082">
    <property type="entry name" value="rbfA"/>
    <property type="match status" value="1"/>
</dbReference>
<dbReference type="PANTHER" id="PTHR33515">
    <property type="entry name" value="RIBOSOME-BINDING FACTOR A, CHLOROPLASTIC-RELATED"/>
    <property type="match status" value="1"/>
</dbReference>
<dbReference type="PANTHER" id="PTHR33515:SF1">
    <property type="entry name" value="RIBOSOME-BINDING FACTOR A, CHLOROPLASTIC-RELATED"/>
    <property type="match status" value="1"/>
</dbReference>
<dbReference type="Pfam" id="PF02033">
    <property type="entry name" value="RBFA"/>
    <property type="match status" value="1"/>
</dbReference>
<dbReference type="SUPFAM" id="SSF89919">
    <property type="entry name" value="Ribosome-binding factor A, RbfA"/>
    <property type="match status" value="1"/>
</dbReference>
<feature type="chain" id="PRO_0000321263" description="Ribosome-binding factor A">
    <location>
        <begin position="1"/>
        <end position="117"/>
    </location>
</feature>
<evidence type="ECO:0000255" key="1">
    <source>
        <dbReference type="HAMAP-Rule" id="MF_00003"/>
    </source>
</evidence>
<gene>
    <name evidence="1" type="primary">rbfA</name>
    <name type="ordered locus">Sfum_1230</name>
</gene>
<protein>
    <recommendedName>
        <fullName evidence="1">Ribosome-binding factor A</fullName>
    </recommendedName>
</protein>
<accession>A0LHM0</accession>
<comment type="function">
    <text evidence="1">One of several proteins that assist in the late maturation steps of the functional core of the 30S ribosomal subunit. Associates with free 30S ribosomal subunits (but not with 30S subunits that are part of 70S ribosomes or polysomes). Required for efficient processing of 16S rRNA. May interact with the 5'-terminal helix region of 16S rRNA.</text>
</comment>
<comment type="subunit">
    <text evidence="1">Monomer. Binds 30S ribosomal subunits, but not 50S ribosomal subunits or 70S ribosomes.</text>
</comment>
<comment type="subcellular location">
    <subcellularLocation>
        <location evidence="1">Cytoplasm</location>
    </subcellularLocation>
</comment>
<comment type="similarity">
    <text evidence="1">Belongs to the RbfA family.</text>
</comment>
<keyword id="KW-0963">Cytoplasm</keyword>
<keyword id="KW-1185">Reference proteome</keyword>
<keyword id="KW-0690">Ribosome biogenesis</keyword>
<name>RBFA_SYNFM</name>